<gene>
    <name evidence="1" type="primary">leuD</name>
    <name type="ordered locus">BTH_II0673</name>
</gene>
<accession>Q2T7H7</accession>
<sequence length="216" mass="24838">MEKFNVHTGVVAPLDRENVDTDAIIPKQFLKSIKRTGFGPNAFDEWRYLDHGEPGQDNSKRPLNPDFVLNQPRYQRASVLLARKNFGCGSSREHAPWALQQYGFRAIIAPSFADIFFNNCYKNGLLPIVLTEQQVDHLFNETYAFNGYQLTIDLDAQVVRAPDGREYPFEITAFRKYCLLNGFDDIGLTLRHAEKIRQFEAERLAKQPWLNNKLVG</sequence>
<proteinExistence type="inferred from homology"/>
<reference key="1">
    <citation type="journal article" date="2005" name="BMC Genomics">
        <title>Bacterial genome adaptation to niches: divergence of the potential virulence genes in three Burkholderia species of different survival strategies.</title>
        <authorList>
            <person name="Kim H.S."/>
            <person name="Schell M.A."/>
            <person name="Yu Y."/>
            <person name="Ulrich R.L."/>
            <person name="Sarria S.H."/>
            <person name="Nierman W.C."/>
            <person name="DeShazer D."/>
        </authorList>
    </citation>
    <scope>NUCLEOTIDE SEQUENCE [LARGE SCALE GENOMIC DNA]</scope>
    <source>
        <strain>ATCC 700388 / DSM 13276 / CCUG 48851 / CIP 106301 / E264</strain>
    </source>
</reference>
<evidence type="ECO:0000255" key="1">
    <source>
        <dbReference type="HAMAP-Rule" id="MF_01031"/>
    </source>
</evidence>
<keyword id="KW-0028">Amino-acid biosynthesis</keyword>
<keyword id="KW-0100">Branched-chain amino acid biosynthesis</keyword>
<keyword id="KW-0432">Leucine biosynthesis</keyword>
<keyword id="KW-0456">Lyase</keyword>
<feature type="chain" id="PRO_1000063747" description="3-isopropylmalate dehydratase small subunit">
    <location>
        <begin position="1"/>
        <end position="216"/>
    </location>
</feature>
<organism>
    <name type="scientific">Burkholderia thailandensis (strain ATCC 700388 / DSM 13276 / CCUG 48851 / CIP 106301 / E264)</name>
    <dbReference type="NCBI Taxonomy" id="271848"/>
    <lineage>
        <taxon>Bacteria</taxon>
        <taxon>Pseudomonadati</taxon>
        <taxon>Pseudomonadota</taxon>
        <taxon>Betaproteobacteria</taxon>
        <taxon>Burkholderiales</taxon>
        <taxon>Burkholderiaceae</taxon>
        <taxon>Burkholderia</taxon>
        <taxon>pseudomallei group</taxon>
    </lineage>
</organism>
<comment type="function">
    <text evidence="1">Catalyzes the isomerization between 2-isopropylmalate and 3-isopropylmalate, via the formation of 2-isopropylmaleate.</text>
</comment>
<comment type="catalytic activity">
    <reaction evidence="1">
        <text>(2R,3S)-3-isopropylmalate = (2S)-2-isopropylmalate</text>
        <dbReference type="Rhea" id="RHEA:32287"/>
        <dbReference type="ChEBI" id="CHEBI:1178"/>
        <dbReference type="ChEBI" id="CHEBI:35121"/>
        <dbReference type="EC" id="4.2.1.33"/>
    </reaction>
</comment>
<comment type="pathway">
    <text evidence="1">Amino-acid biosynthesis; L-leucine biosynthesis; L-leucine from 3-methyl-2-oxobutanoate: step 2/4.</text>
</comment>
<comment type="subunit">
    <text evidence="1">Heterodimer of LeuC and LeuD.</text>
</comment>
<comment type="similarity">
    <text evidence="1">Belongs to the LeuD family. LeuD type 1 subfamily.</text>
</comment>
<dbReference type="EC" id="4.2.1.33" evidence="1"/>
<dbReference type="EMBL" id="CP000085">
    <property type="protein sequence ID" value="ABC35177.1"/>
    <property type="molecule type" value="Genomic_DNA"/>
</dbReference>
<dbReference type="RefSeq" id="WP_009895841.1">
    <property type="nucleotide sequence ID" value="NZ_CP008786.1"/>
</dbReference>
<dbReference type="SMR" id="Q2T7H7"/>
<dbReference type="GeneID" id="45118161"/>
<dbReference type="KEGG" id="bte:BTH_II0673"/>
<dbReference type="HOGENOM" id="CLU_081378_0_3_4"/>
<dbReference type="UniPathway" id="UPA00048">
    <property type="reaction ID" value="UER00071"/>
</dbReference>
<dbReference type="Proteomes" id="UP000001930">
    <property type="component" value="Chromosome II"/>
</dbReference>
<dbReference type="GO" id="GO:0009316">
    <property type="term" value="C:3-isopropylmalate dehydratase complex"/>
    <property type="evidence" value="ECO:0007669"/>
    <property type="project" value="InterPro"/>
</dbReference>
<dbReference type="GO" id="GO:0003861">
    <property type="term" value="F:3-isopropylmalate dehydratase activity"/>
    <property type="evidence" value="ECO:0007669"/>
    <property type="project" value="UniProtKB-UniRule"/>
</dbReference>
<dbReference type="GO" id="GO:0009098">
    <property type="term" value="P:L-leucine biosynthetic process"/>
    <property type="evidence" value="ECO:0007669"/>
    <property type="project" value="UniProtKB-UniRule"/>
</dbReference>
<dbReference type="CDD" id="cd01577">
    <property type="entry name" value="IPMI_Swivel"/>
    <property type="match status" value="1"/>
</dbReference>
<dbReference type="FunFam" id="3.20.19.10:FF:000003">
    <property type="entry name" value="3-isopropylmalate dehydratase small subunit"/>
    <property type="match status" value="1"/>
</dbReference>
<dbReference type="Gene3D" id="3.20.19.10">
    <property type="entry name" value="Aconitase, domain 4"/>
    <property type="match status" value="1"/>
</dbReference>
<dbReference type="HAMAP" id="MF_01031">
    <property type="entry name" value="LeuD_type1"/>
    <property type="match status" value="1"/>
</dbReference>
<dbReference type="InterPro" id="IPR004431">
    <property type="entry name" value="3-IsopropMal_deHydase_ssu"/>
</dbReference>
<dbReference type="InterPro" id="IPR015928">
    <property type="entry name" value="Aconitase/3IPM_dehydase_swvl"/>
</dbReference>
<dbReference type="InterPro" id="IPR000573">
    <property type="entry name" value="AconitaseA/IPMdHydase_ssu_swvl"/>
</dbReference>
<dbReference type="InterPro" id="IPR033940">
    <property type="entry name" value="IPMI_Swivel"/>
</dbReference>
<dbReference type="InterPro" id="IPR050075">
    <property type="entry name" value="LeuD"/>
</dbReference>
<dbReference type="NCBIfam" id="TIGR00171">
    <property type="entry name" value="leuD"/>
    <property type="match status" value="1"/>
</dbReference>
<dbReference type="NCBIfam" id="NF002458">
    <property type="entry name" value="PRK01641.1"/>
    <property type="match status" value="1"/>
</dbReference>
<dbReference type="PANTHER" id="PTHR43345:SF5">
    <property type="entry name" value="3-ISOPROPYLMALATE DEHYDRATASE SMALL SUBUNIT"/>
    <property type="match status" value="1"/>
</dbReference>
<dbReference type="PANTHER" id="PTHR43345">
    <property type="entry name" value="3-ISOPROPYLMALATE DEHYDRATASE SMALL SUBUNIT 2-RELATED-RELATED"/>
    <property type="match status" value="1"/>
</dbReference>
<dbReference type="Pfam" id="PF00694">
    <property type="entry name" value="Aconitase_C"/>
    <property type="match status" value="1"/>
</dbReference>
<dbReference type="SUPFAM" id="SSF52016">
    <property type="entry name" value="LeuD/IlvD-like"/>
    <property type="match status" value="1"/>
</dbReference>
<protein>
    <recommendedName>
        <fullName evidence="1">3-isopropylmalate dehydratase small subunit</fullName>
        <ecNumber evidence="1">4.2.1.33</ecNumber>
    </recommendedName>
    <alternativeName>
        <fullName evidence="1">Alpha-IPM isomerase</fullName>
        <shortName evidence="1">IPMI</shortName>
    </alternativeName>
    <alternativeName>
        <fullName evidence="1">Isopropylmalate isomerase</fullName>
    </alternativeName>
</protein>
<name>LEUD_BURTA</name>